<evidence type="ECO:0000255" key="1">
    <source>
        <dbReference type="HAMAP-Rule" id="MF_00551"/>
    </source>
</evidence>
<comment type="catalytic activity">
    <reaction evidence="1">
        <text>uridine + ATP = UMP + ADP + H(+)</text>
        <dbReference type="Rhea" id="RHEA:16825"/>
        <dbReference type="ChEBI" id="CHEBI:15378"/>
        <dbReference type="ChEBI" id="CHEBI:16704"/>
        <dbReference type="ChEBI" id="CHEBI:30616"/>
        <dbReference type="ChEBI" id="CHEBI:57865"/>
        <dbReference type="ChEBI" id="CHEBI:456216"/>
        <dbReference type="EC" id="2.7.1.48"/>
    </reaction>
</comment>
<comment type="catalytic activity">
    <reaction evidence="1">
        <text>cytidine + ATP = CMP + ADP + H(+)</text>
        <dbReference type="Rhea" id="RHEA:24674"/>
        <dbReference type="ChEBI" id="CHEBI:15378"/>
        <dbReference type="ChEBI" id="CHEBI:17562"/>
        <dbReference type="ChEBI" id="CHEBI:30616"/>
        <dbReference type="ChEBI" id="CHEBI:60377"/>
        <dbReference type="ChEBI" id="CHEBI:456216"/>
        <dbReference type="EC" id="2.7.1.48"/>
    </reaction>
</comment>
<comment type="pathway">
    <text evidence="1">Pyrimidine metabolism; CTP biosynthesis via salvage pathway; CTP from cytidine: step 1/3.</text>
</comment>
<comment type="pathway">
    <text evidence="1">Pyrimidine metabolism; UMP biosynthesis via salvage pathway; UMP from uridine: step 1/1.</text>
</comment>
<comment type="subcellular location">
    <subcellularLocation>
        <location evidence="1">Cytoplasm</location>
    </subcellularLocation>
</comment>
<comment type="similarity">
    <text evidence="1">Belongs to the uridine kinase family.</text>
</comment>
<dbReference type="EC" id="2.7.1.48" evidence="1"/>
<dbReference type="EMBL" id="AE016827">
    <property type="protein sequence ID" value="AAU38189.1"/>
    <property type="molecule type" value="Genomic_DNA"/>
</dbReference>
<dbReference type="RefSeq" id="WP_011200753.1">
    <property type="nucleotide sequence ID" value="NC_006300.1"/>
</dbReference>
<dbReference type="SMR" id="Q65S71"/>
<dbReference type="STRING" id="221988.MS1582"/>
<dbReference type="KEGG" id="msu:MS1582"/>
<dbReference type="eggNOG" id="COG0572">
    <property type="taxonomic scope" value="Bacteria"/>
</dbReference>
<dbReference type="HOGENOM" id="CLU_021278_1_2_6"/>
<dbReference type="OrthoDB" id="9777642at2"/>
<dbReference type="UniPathway" id="UPA00574">
    <property type="reaction ID" value="UER00637"/>
</dbReference>
<dbReference type="UniPathway" id="UPA00579">
    <property type="reaction ID" value="UER00640"/>
</dbReference>
<dbReference type="Proteomes" id="UP000000607">
    <property type="component" value="Chromosome"/>
</dbReference>
<dbReference type="GO" id="GO:0005737">
    <property type="term" value="C:cytoplasm"/>
    <property type="evidence" value="ECO:0007669"/>
    <property type="project" value="UniProtKB-SubCell"/>
</dbReference>
<dbReference type="GO" id="GO:0005524">
    <property type="term" value="F:ATP binding"/>
    <property type="evidence" value="ECO:0007669"/>
    <property type="project" value="UniProtKB-UniRule"/>
</dbReference>
<dbReference type="GO" id="GO:0043771">
    <property type="term" value="F:cytidine kinase activity"/>
    <property type="evidence" value="ECO:0007669"/>
    <property type="project" value="RHEA"/>
</dbReference>
<dbReference type="GO" id="GO:0004849">
    <property type="term" value="F:uridine kinase activity"/>
    <property type="evidence" value="ECO:0007669"/>
    <property type="project" value="UniProtKB-UniRule"/>
</dbReference>
<dbReference type="GO" id="GO:0044211">
    <property type="term" value="P:CTP salvage"/>
    <property type="evidence" value="ECO:0007669"/>
    <property type="project" value="UniProtKB-UniRule"/>
</dbReference>
<dbReference type="GO" id="GO:0044206">
    <property type="term" value="P:UMP salvage"/>
    <property type="evidence" value="ECO:0007669"/>
    <property type="project" value="UniProtKB-UniRule"/>
</dbReference>
<dbReference type="CDD" id="cd02023">
    <property type="entry name" value="UMPK"/>
    <property type="match status" value="1"/>
</dbReference>
<dbReference type="Gene3D" id="3.40.50.300">
    <property type="entry name" value="P-loop containing nucleotide triphosphate hydrolases"/>
    <property type="match status" value="1"/>
</dbReference>
<dbReference type="HAMAP" id="MF_00551">
    <property type="entry name" value="Uridine_kinase"/>
    <property type="match status" value="1"/>
</dbReference>
<dbReference type="InterPro" id="IPR027417">
    <property type="entry name" value="P-loop_NTPase"/>
</dbReference>
<dbReference type="InterPro" id="IPR006083">
    <property type="entry name" value="PRK/URK"/>
</dbReference>
<dbReference type="InterPro" id="IPR026008">
    <property type="entry name" value="Uridine_kinase"/>
</dbReference>
<dbReference type="InterPro" id="IPR000764">
    <property type="entry name" value="Uridine_kinase-like"/>
</dbReference>
<dbReference type="NCBIfam" id="NF004018">
    <property type="entry name" value="PRK05480.1"/>
    <property type="match status" value="1"/>
</dbReference>
<dbReference type="NCBIfam" id="TIGR00235">
    <property type="entry name" value="udk"/>
    <property type="match status" value="1"/>
</dbReference>
<dbReference type="PANTHER" id="PTHR10285">
    <property type="entry name" value="URIDINE KINASE"/>
    <property type="match status" value="1"/>
</dbReference>
<dbReference type="Pfam" id="PF00485">
    <property type="entry name" value="PRK"/>
    <property type="match status" value="1"/>
</dbReference>
<dbReference type="PRINTS" id="PR00988">
    <property type="entry name" value="URIDINKINASE"/>
</dbReference>
<dbReference type="SUPFAM" id="SSF52540">
    <property type="entry name" value="P-loop containing nucleoside triphosphate hydrolases"/>
    <property type="match status" value="1"/>
</dbReference>
<protein>
    <recommendedName>
        <fullName evidence="1">Uridine kinase</fullName>
        <ecNumber evidence="1">2.7.1.48</ecNumber>
    </recommendedName>
    <alternativeName>
        <fullName evidence="1">Cytidine monophosphokinase</fullName>
    </alternativeName>
    <alternativeName>
        <fullName evidence="1">Uridine monophosphokinase</fullName>
    </alternativeName>
</protein>
<keyword id="KW-0067">ATP-binding</keyword>
<keyword id="KW-0963">Cytoplasm</keyword>
<keyword id="KW-0418">Kinase</keyword>
<keyword id="KW-0547">Nucleotide-binding</keyword>
<keyword id="KW-0808">Transferase</keyword>
<reference key="1">
    <citation type="journal article" date="2004" name="Nat. Biotechnol.">
        <title>The genome sequence of the capnophilic rumen bacterium Mannheimia succiniciproducens.</title>
        <authorList>
            <person name="Hong S.H."/>
            <person name="Kim J.S."/>
            <person name="Lee S.Y."/>
            <person name="In Y.H."/>
            <person name="Choi S.S."/>
            <person name="Rih J.-K."/>
            <person name="Kim C.H."/>
            <person name="Jeong H."/>
            <person name="Hur C.G."/>
            <person name="Kim J.J."/>
        </authorList>
    </citation>
    <scope>NUCLEOTIDE SEQUENCE [LARGE SCALE GENOMIC DNA]</scope>
    <source>
        <strain>KCTC 0769BP / MBEL55E</strain>
    </source>
</reference>
<proteinExistence type="inferred from homology"/>
<name>URK_MANSM</name>
<gene>
    <name evidence="1" type="primary">udk</name>
    <name type="ordered locus">MS1582</name>
</gene>
<organism>
    <name type="scientific">Mannheimia succiniciproducens (strain KCTC 0769BP / MBEL55E)</name>
    <dbReference type="NCBI Taxonomy" id="221988"/>
    <lineage>
        <taxon>Bacteria</taxon>
        <taxon>Pseudomonadati</taxon>
        <taxon>Pseudomonadota</taxon>
        <taxon>Gammaproteobacteria</taxon>
        <taxon>Pasteurellales</taxon>
        <taxon>Pasteurellaceae</taxon>
        <taxon>Basfia</taxon>
    </lineage>
</organism>
<accession>Q65S71</accession>
<feature type="chain" id="PRO_1000017885" description="Uridine kinase">
    <location>
        <begin position="1"/>
        <end position="216"/>
    </location>
</feature>
<feature type="binding site" evidence="1">
    <location>
        <begin position="16"/>
        <end position="23"/>
    </location>
    <ligand>
        <name>ATP</name>
        <dbReference type="ChEBI" id="CHEBI:30616"/>
    </ligand>
</feature>
<sequence>MSDSANSSCIIIAIAGASASGKSLIASTVHRELRDQVGSDDISIISEDCYYKDQSHLDFATRTQTNYDHPNSMDRDLLLEHLRALKAGKSVDIPQYSYVEHTRMKEVTHFTPKKVIILEGILLLTDERVRNELSLSLFVDAPLDICFIRRLKRDMEERGRSLESVIEQYRKTVRPMFLQFIEPSKQYADIIIPRGGKNRIAINMLKAQILHLLGRK</sequence>